<name>MAZ_HUMAN</name>
<reference key="1">
    <citation type="journal article" date="1992" name="Proc. Natl. Acad. Sci. U.S.A.">
        <title>MAZ, a zinc finger protein, binds to c-MYC and C2 gene sequences regulating transcriptional initiation and termination.</title>
        <authorList>
            <person name="Bossone S.A."/>
            <person name="Asselin C."/>
            <person name="Patel A.J."/>
            <person name="Marcu K.B."/>
        </authorList>
    </citation>
    <scope>NUCLEOTIDE SEQUENCE [MRNA] (ISOFORM 1)</scope>
    <scope>FUNCTION</scope>
    <scope>TISSUE SPECIFICITY</scope>
</reference>
<reference key="2">
    <citation type="journal article" date="1992" name="Biochemistry">
        <title>Isolation of a novel cDNA encoding a zinc-finger protein that binds to two sites within the c-myc promoter.</title>
        <authorList>
            <person name="Pyrc J.J."/>
            <person name="Moberg K.H."/>
            <person name="Hall D.J."/>
        </authorList>
    </citation>
    <scope>NUCLEOTIDE SEQUENCE [MRNA] (ISOFORM 1)</scope>
    <source>
        <tissue>Carcinoma</tissue>
    </source>
</reference>
<reference key="3">
    <citation type="journal article" date="1996" name="Biochem. Biophys. Res. Commun.">
        <title>Members of the MAZ family: a novel cDNA clone for MAZ from human pancreatic islet cells.</title>
        <authorList>
            <person name="Tsutsui H."/>
            <person name="Sakatsume O."/>
            <person name="Itakura K."/>
            <person name="Yokoyama K.K."/>
        </authorList>
    </citation>
    <scope>NUCLEOTIDE SEQUENCE [MRNA] (ISOFORM 1)</scope>
    <source>
        <tissue>Pancreatic islet</tissue>
    </source>
</reference>
<reference key="4">
    <citation type="journal article" date="1996" name="J. Biol. Chem.">
        <title>The serotonin 1a receptor gene contains a TATA-less promoter that responds to MAZ and Sp1.</title>
        <authorList>
            <person name="Parks C.L."/>
            <person name="Shenk T."/>
        </authorList>
    </citation>
    <scope>NUCLEOTIDE SEQUENCE [MRNA] (ISOFORM 1)</scope>
</reference>
<reference key="5">
    <citation type="journal article" date="1998" name="J. Biol. Chem.">
        <title>Genomic organization and expression of a human gene for Myc-associated zinc finger protein (MAZ).</title>
        <authorList>
            <person name="Song J."/>
            <person name="Murakami H."/>
            <person name="Tsutsui H."/>
            <person name="Tang X."/>
            <person name="Matsumura M."/>
            <person name="Itakura K."/>
            <person name="Kanazawa I."/>
            <person name="Sun K."/>
            <person name="Yokoyama K.K."/>
        </authorList>
    </citation>
    <scope>NUCLEOTIDE SEQUENCE [GENOMIC DNA]</scope>
    <source>
        <tissue>Lymphoblastoma</tissue>
    </source>
</reference>
<reference key="6">
    <citation type="journal article" date="2002" name="J. Biol. Chem.">
        <title>SAF-2, a splice variant of SAF-1, acts as a negative regulator of transcription.</title>
        <authorList>
            <person name="Ray B.K."/>
            <person name="Murphy R."/>
            <person name="Ray P."/>
            <person name="Ray A."/>
        </authorList>
    </citation>
    <scope>NUCLEOTIDE SEQUENCE [MRNA] (ISOFORM 2)</scope>
    <scope>ALTERNATIVE SPLICING</scope>
    <scope>FUNCTION</scope>
    <scope>SUBUNIT</scope>
</reference>
<reference key="7">
    <citation type="submission" date="2006-10" db="EMBL/GenBank/DDBJ databases">
        <title>Human Myc-associated zinc finger protein (MAZ).</title>
        <authorList>
            <person name="Bae J.S."/>
            <person name="Kim S.H."/>
            <person name="Park H.S."/>
        </authorList>
    </citation>
    <scope>NUCLEOTIDE SEQUENCE [MRNA] (ISOFORM 1)</scope>
</reference>
<reference key="8">
    <citation type="journal article" date="2009" name="FEBS J.">
        <title>SAF-3, a novel splice variant of the SAF-1/MAZ/Pur-1 family, is expressed during inflammation.</title>
        <authorList>
            <person name="Ray A."/>
            <person name="Dhar S."/>
            <person name="Shakya A."/>
            <person name="Ray P."/>
            <person name="Okada Y."/>
            <person name="Ray B.K."/>
        </authorList>
    </citation>
    <scope>NUCLEOTIDE SEQUENCE [MRNA] (ISOFORM 3)</scope>
    <scope>FUNCTION</scope>
    <scope>TISSUE SPECIFICITY</scope>
    <scope>INDUCTION BY CYTOKINES AND GROWTH FACTORS</scope>
</reference>
<reference key="9">
    <citation type="journal article" date="2004" name="Nature">
        <title>The sequence and analysis of duplication-rich human chromosome 16.</title>
        <authorList>
            <person name="Martin J."/>
            <person name="Han C."/>
            <person name="Gordon L.A."/>
            <person name="Terry A."/>
            <person name="Prabhakar S."/>
            <person name="She X."/>
            <person name="Xie G."/>
            <person name="Hellsten U."/>
            <person name="Chan Y.M."/>
            <person name="Altherr M."/>
            <person name="Couronne O."/>
            <person name="Aerts A."/>
            <person name="Bajorek E."/>
            <person name="Black S."/>
            <person name="Blumer H."/>
            <person name="Branscomb E."/>
            <person name="Brown N.C."/>
            <person name="Bruno W.J."/>
            <person name="Buckingham J.M."/>
            <person name="Callen D.F."/>
            <person name="Campbell C.S."/>
            <person name="Campbell M.L."/>
            <person name="Campbell E.W."/>
            <person name="Caoile C."/>
            <person name="Challacombe J.F."/>
            <person name="Chasteen L.A."/>
            <person name="Chertkov O."/>
            <person name="Chi H.C."/>
            <person name="Christensen M."/>
            <person name="Clark L.M."/>
            <person name="Cohn J.D."/>
            <person name="Denys M."/>
            <person name="Detter J.C."/>
            <person name="Dickson M."/>
            <person name="Dimitrijevic-Bussod M."/>
            <person name="Escobar J."/>
            <person name="Fawcett J.J."/>
            <person name="Flowers D."/>
            <person name="Fotopulos D."/>
            <person name="Glavina T."/>
            <person name="Gomez M."/>
            <person name="Gonzales E."/>
            <person name="Goodstein D."/>
            <person name="Goodwin L.A."/>
            <person name="Grady D.L."/>
            <person name="Grigoriev I."/>
            <person name="Groza M."/>
            <person name="Hammon N."/>
            <person name="Hawkins T."/>
            <person name="Haydu L."/>
            <person name="Hildebrand C.E."/>
            <person name="Huang W."/>
            <person name="Israni S."/>
            <person name="Jett J."/>
            <person name="Jewett P.B."/>
            <person name="Kadner K."/>
            <person name="Kimball H."/>
            <person name="Kobayashi A."/>
            <person name="Krawczyk M.-C."/>
            <person name="Leyba T."/>
            <person name="Longmire J.L."/>
            <person name="Lopez F."/>
            <person name="Lou Y."/>
            <person name="Lowry S."/>
            <person name="Ludeman T."/>
            <person name="Manohar C.F."/>
            <person name="Mark G.A."/>
            <person name="McMurray K.L."/>
            <person name="Meincke L.J."/>
            <person name="Morgan J."/>
            <person name="Moyzis R.K."/>
            <person name="Mundt M.O."/>
            <person name="Munk A.C."/>
            <person name="Nandkeshwar R.D."/>
            <person name="Pitluck S."/>
            <person name="Pollard M."/>
            <person name="Predki P."/>
            <person name="Parson-Quintana B."/>
            <person name="Ramirez L."/>
            <person name="Rash S."/>
            <person name="Retterer J."/>
            <person name="Ricke D.O."/>
            <person name="Robinson D.L."/>
            <person name="Rodriguez A."/>
            <person name="Salamov A."/>
            <person name="Saunders E.H."/>
            <person name="Scott D."/>
            <person name="Shough T."/>
            <person name="Stallings R.L."/>
            <person name="Stalvey M."/>
            <person name="Sutherland R.D."/>
            <person name="Tapia R."/>
            <person name="Tesmer J.G."/>
            <person name="Thayer N."/>
            <person name="Thompson L.S."/>
            <person name="Tice H."/>
            <person name="Torney D.C."/>
            <person name="Tran-Gyamfi M."/>
            <person name="Tsai M."/>
            <person name="Ulanovsky L.E."/>
            <person name="Ustaszewska A."/>
            <person name="Vo N."/>
            <person name="White P.S."/>
            <person name="Williams A.L."/>
            <person name="Wills P.L."/>
            <person name="Wu J.-R."/>
            <person name="Wu K."/>
            <person name="Yang J."/>
            <person name="DeJong P."/>
            <person name="Bruce D."/>
            <person name="Doggett N.A."/>
            <person name="Deaven L."/>
            <person name="Schmutz J."/>
            <person name="Grimwood J."/>
            <person name="Richardson P."/>
            <person name="Rokhsar D.S."/>
            <person name="Eichler E.E."/>
            <person name="Gilna P."/>
            <person name="Lucas S.M."/>
            <person name="Myers R.M."/>
            <person name="Rubin E.M."/>
            <person name="Pennacchio L.A."/>
        </authorList>
    </citation>
    <scope>NUCLEOTIDE SEQUENCE [LARGE SCALE GENOMIC DNA]</scope>
</reference>
<reference key="10">
    <citation type="submission" date="2005-07" db="EMBL/GenBank/DDBJ databases">
        <authorList>
            <person name="Mural R.J."/>
            <person name="Istrail S."/>
            <person name="Sutton G.G."/>
            <person name="Florea L."/>
            <person name="Halpern A.L."/>
            <person name="Mobarry C.M."/>
            <person name="Lippert R."/>
            <person name="Walenz B."/>
            <person name="Shatkay H."/>
            <person name="Dew I."/>
            <person name="Miller J.R."/>
            <person name="Flanigan M.J."/>
            <person name="Edwards N.J."/>
            <person name="Bolanos R."/>
            <person name="Fasulo D."/>
            <person name="Halldorsson B.V."/>
            <person name="Hannenhalli S."/>
            <person name="Turner R."/>
            <person name="Yooseph S."/>
            <person name="Lu F."/>
            <person name="Nusskern D.R."/>
            <person name="Shue B.C."/>
            <person name="Zheng X.H."/>
            <person name="Zhong F."/>
            <person name="Delcher A.L."/>
            <person name="Huson D.H."/>
            <person name="Kravitz S.A."/>
            <person name="Mouchard L."/>
            <person name="Reinert K."/>
            <person name="Remington K.A."/>
            <person name="Clark A.G."/>
            <person name="Waterman M.S."/>
            <person name="Eichler E.E."/>
            <person name="Adams M.D."/>
            <person name="Hunkapiller M.W."/>
            <person name="Myers E.W."/>
            <person name="Venter J.C."/>
        </authorList>
    </citation>
    <scope>NUCLEOTIDE SEQUENCE [LARGE SCALE GENOMIC DNA]</scope>
</reference>
<reference key="11">
    <citation type="journal article" date="2000" name="Biochemistry">
        <title>Fetal Alz-50 clone 1 (FAC1) protein interacts with the Myc-associated zinc finger protein (ZF87/MAZ) and alters its transcriptional activity.</title>
        <authorList>
            <person name="Jordan-Sciutto K.L."/>
            <person name="Dragich J.M."/>
            <person name="Caltagarone J."/>
            <person name="Hall D.J."/>
            <person name="Bowser R."/>
        </authorList>
    </citation>
    <scope>INTERACTION WITH BPTF</scope>
    <scope>TISSUE SPECIFICITY</scope>
    <scope>SUBCELLULAR LOCATION</scope>
</reference>
<reference key="12">
    <citation type="journal article" date="2010" name="Sci. Signal.">
        <title>Quantitative phosphoproteomics reveals widespread full phosphorylation site occupancy during mitosis.</title>
        <authorList>
            <person name="Olsen J.V."/>
            <person name="Vermeulen M."/>
            <person name="Santamaria A."/>
            <person name="Kumar C."/>
            <person name="Miller M.L."/>
            <person name="Jensen L.J."/>
            <person name="Gnad F."/>
            <person name="Cox J."/>
            <person name="Jensen T.S."/>
            <person name="Nigg E.A."/>
            <person name="Brunak S."/>
            <person name="Mann M."/>
        </authorList>
    </citation>
    <scope>IDENTIFICATION BY MASS SPECTROMETRY [LARGE SCALE ANALYSIS]</scope>
    <source>
        <tissue>Cervix carcinoma</tissue>
    </source>
</reference>
<reference key="13">
    <citation type="journal article" date="2011" name="BMC Syst. Biol.">
        <title>Initial characterization of the human central proteome.</title>
        <authorList>
            <person name="Burkard T.R."/>
            <person name="Planyavsky M."/>
            <person name="Kaupe I."/>
            <person name="Breitwieser F.P."/>
            <person name="Buerckstuemmer T."/>
            <person name="Bennett K.L."/>
            <person name="Superti-Furga G."/>
            <person name="Colinge J."/>
        </authorList>
    </citation>
    <scope>IDENTIFICATION BY MASS SPECTROMETRY [LARGE SCALE ANALYSIS]</scope>
</reference>
<reference key="14">
    <citation type="journal article" date="2011" name="Sci. Signal.">
        <title>System-wide temporal characterization of the proteome and phosphoproteome of human embryonic stem cell differentiation.</title>
        <authorList>
            <person name="Rigbolt K.T."/>
            <person name="Prokhorova T.A."/>
            <person name="Akimov V."/>
            <person name="Henningsen J."/>
            <person name="Johansen P.T."/>
            <person name="Kratchmarova I."/>
            <person name="Kassem M."/>
            <person name="Mann M."/>
            <person name="Olsen J.V."/>
            <person name="Blagoev B."/>
        </authorList>
    </citation>
    <scope>IDENTIFICATION BY MASS SPECTROMETRY [LARGE SCALE ANALYSIS]</scope>
</reference>
<reference key="15">
    <citation type="journal article" date="2013" name="J. Proteome Res.">
        <title>Toward a comprehensive characterization of a human cancer cell phosphoproteome.</title>
        <authorList>
            <person name="Zhou H."/>
            <person name="Di Palma S."/>
            <person name="Preisinger C."/>
            <person name="Peng M."/>
            <person name="Polat A.N."/>
            <person name="Heck A.J."/>
            <person name="Mohammed S."/>
        </authorList>
    </citation>
    <scope>PHOSPHORYLATION [LARGE SCALE ANALYSIS] AT SER-361</scope>
    <scope>IDENTIFICATION BY MASS SPECTROMETRY [LARGE SCALE ANALYSIS]</scope>
    <source>
        <tissue>Cervix carcinoma</tissue>
        <tissue>Erythroleukemia</tissue>
    </source>
</reference>
<feature type="chain" id="PRO_0000047215" description="Myc-associated zinc finger protein">
    <location>
        <begin position="1"/>
        <end position="477"/>
    </location>
</feature>
<feature type="zinc finger region" description="C2H2-type 1" evidence="1">
    <location>
        <begin position="190"/>
        <end position="212"/>
    </location>
</feature>
<feature type="zinc finger region" description="C2H2-type 2" evidence="1">
    <location>
        <begin position="279"/>
        <end position="301"/>
    </location>
</feature>
<feature type="zinc finger region" description="C2H2-type 3" evidence="1">
    <location>
        <begin position="307"/>
        <end position="329"/>
    </location>
</feature>
<feature type="zinc finger region" description="C2H2-type 4" evidence="1">
    <location>
        <begin position="337"/>
        <end position="360"/>
    </location>
</feature>
<feature type="zinc finger region" description="C2H2-type 5" evidence="1">
    <location>
        <begin position="366"/>
        <end position="388"/>
    </location>
</feature>
<feature type="zinc finger region" description="C2H2-type 6; atypical" evidence="1">
    <location>
        <begin position="392"/>
        <end position="413"/>
    </location>
</feature>
<feature type="region of interest" description="Disordered" evidence="2">
    <location>
        <begin position="59"/>
        <end position="78"/>
    </location>
</feature>
<feature type="region of interest" description="Disordered" evidence="2">
    <location>
        <begin position="121"/>
        <end position="146"/>
    </location>
</feature>
<feature type="compositionally biased region" description="Pro residues" evidence="2">
    <location>
        <begin position="130"/>
        <end position="141"/>
    </location>
</feature>
<feature type="modified residue" description="Phosphoserine" evidence="12">
    <location>
        <position position="361"/>
    </location>
</feature>
<feature type="splice variant" id="VSP_047560" description="In isoform 3." evidence="9">
    <original>MFPVFPCTLLAPPFPVLGLDSRGVGGLMNSFPPP</original>
    <variation>MDPSNWSSFIF</variation>
    <location>
        <begin position="1"/>
        <end position="34"/>
    </location>
</feature>
<feature type="splice variant" id="VSP_055108" description="In isoform 4." evidence="10">
    <location>
        <begin position="65"/>
        <end position="369"/>
    </location>
</feature>
<feature type="splice variant" id="VSP_044561" description="In isoform 2." evidence="7">
    <original>TGEVCPMAAAAAAAAAAAAAAVAAPPTAVGSLSGAEGVPVSSQPLPSQPW</original>
    <variation>FTTAAYLRIHAVKDHGLQAPRADRILCKLCSVHCKTPAQLAGHMQTHLGGAAPPVPGDAPQPQPTC</variation>
    <location>
        <begin position="428"/>
        <end position="477"/>
    </location>
</feature>
<feature type="sequence conflict" description="In Ref. 3; BAA12728." evidence="10" ref="3">
    <location>
        <position position="259"/>
    </location>
</feature>
<feature type="sequence conflict" description="In Ref. 6; AAN03800." evidence="10" ref="6">
    <original>E</original>
    <variation>K</variation>
    <location>
        <position position="389"/>
    </location>
</feature>
<feature type="sequence conflict" description="In Ref. 6; AAN03800." evidence="10" ref="6">
    <original>HV</original>
    <variation>PW</variation>
    <location>
        <begin position="395"/>
        <end position="396"/>
    </location>
</feature>
<feature type="sequence conflict" description="In Ref. 2 and 4." evidence="10" ref="2 4">
    <original>L</original>
    <variation>M</variation>
    <location>
        <position position="401"/>
    </location>
</feature>
<feature type="sequence conflict" description="In Ref. 3." evidence="10" ref="3">
    <location>
        <begin position="443"/>
        <end position="447"/>
    </location>
</feature>
<protein>
    <recommendedName>
        <fullName>Myc-associated zinc finger protein</fullName>
        <shortName>MAZI</shortName>
    </recommendedName>
    <alternativeName>
        <fullName>Pur-1</fullName>
    </alternativeName>
    <alternativeName>
        <fullName>Purine-binding transcription factor</fullName>
    </alternativeName>
    <alternativeName>
        <fullName>Serum amyloid A-activating factor-1</fullName>
        <shortName>SAF-1</shortName>
    </alternativeName>
    <alternativeName>
        <fullName>Transcription factor Zif87</fullName>
    </alternativeName>
    <alternativeName>
        <fullName>ZF87</fullName>
    </alternativeName>
    <alternativeName>
        <fullName>Zinc finger protein 801</fullName>
    </alternativeName>
</protein>
<comment type="function">
    <text evidence="8">Transcriptional regulator, potentially with dual roles in transcription initiation and termination.</text>
</comment>
<comment type="function">
    <molecule>Isoform 1</molecule>
    <text evidence="4 5">Binds DNA and functions as a transcriptional activator (PubMed:12270922). Binds to two G/A-rich sites, ME1a1 and ME1a2, within the MYC promoter having greater affinity for the former (PubMed:1502157). Also binds to multiple G/C-rich sites within the promoter of the Sp1 family of transcription factors (PubMed:1502157).</text>
</comment>
<comment type="function">
    <molecule>Isoform 2</molecule>
    <text evidence="4">Binds DNA and functions as a transcriptional activator (PubMed:12270922). Inhibits MAZ isoform 1-mediated transcription (PubMed:12270922).</text>
</comment>
<comment type="function">
    <molecule>Isoform 3</molecule>
    <text evidence="6">Binds DNA and functions as a transcriptional activator.</text>
</comment>
<comment type="subunit">
    <text evidence="3">Interacts with BPTF.</text>
</comment>
<comment type="subunit">
    <molecule>Isoform 1</molecule>
    <text evidence="4">Forms a heterodimer with MAZ isoform 2; the interaction inhibits MAZ isoform 1-mediated transcription activation.</text>
</comment>
<comment type="subunit">
    <molecule>Isoform 2</molecule>
    <text evidence="4">Forms a heterodimer with MAZ isoform 1; the interaction inhibits MAZ isoform 1-mediated transcription activation.</text>
</comment>
<comment type="interaction">
    <interactant intactId="EBI-1809742">
        <id>P56270</id>
    </interactant>
    <interactant intactId="EBI-715495">
        <id>P05090</id>
        <label>APOD</label>
    </interactant>
    <organismsDiffer>false</organismsDiffer>
    <experiments>2</experiments>
</comment>
<comment type="interaction">
    <interactant intactId="EBI-1809742">
        <id>P56270</id>
    </interactant>
    <interactant intactId="EBI-1222919">
        <id>P43146</id>
        <label>DCC</label>
    </interactant>
    <organismsDiffer>false</organismsDiffer>
    <experiments>4</experiments>
</comment>
<comment type="interaction">
    <interactant intactId="EBI-1809742">
        <id>P56270</id>
    </interactant>
    <interactant intactId="EBI-1798863">
        <id>P70211</id>
        <label>Dcc</label>
    </interactant>
    <organismsDiffer>true</organismsDiffer>
    <experiments>2</experiments>
</comment>
<comment type="interaction">
    <interactant intactId="EBI-1809742">
        <id>P56270</id>
    </interactant>
    <interactant intactId="EBI-1809954">
        <id>Q91562</id>
        <label>dcc.L</label>
    </interactant>
    <organismsDiffer>true</organismsDiffer>
    <experiments>2</experiments>
</comment>
<comment type="interaction">
    <interactant intactId="EBI-12068586">
        <id>P56270-2</id>
    </interactant>
    <interactant intactId="EBI-466029">
        <id>P42858</id>
        <label>HTT</label>
    </interactant>
    <organismsDiffer>false</organismsDiffer>
    <experiments>3</experiments>
</comment>
<comment type="interaction">
    <interactant intactId="EBI-12068586">
        <id>P56270-2</id>
    </interactant>
    <interactant intactId="EBI-10172052">
        <id>P60411</id>
        <label>KRTAP10-9</label>
    </interactant>
    <organismsDiffer>false</organismsDiffer>
    <experiments>3</experiments>
</comment>
<comment type="interaction">
    <interactant intactId="EBI-12068586">
        <id>P56270-2</id>
    </interactant>
    <interactant intactId="EBI-79165">
        <id>Q9NRD5</id>
        <label>PICK1</label>
    </interactant>
    <organismsDiffer>false</organismsDiffer>
    <experiments>3</experiments>
</comment>
<comment type="subcellular location">
    <subcellularLocation>
        <location evidence="11">Nucleus</location>
    </subcellularLocation>
    <text>In brains of Alzheimer disease patients, present in a plaque-like structures.</text>
</comment>
<comment type="alternative products">
    <event type="alternative splicing"/>
    <isoform>
        <id>P56270-1</id>
        <name>1</name>
        <name>SAF-1</name>
        <sequence type="displayed"/>
    </isoform>
    <isoform>
        <id>P56270-2</id>
        <name>2</name>
        <name>SAF-2</name>
        <sequence type="described" ref="VSP_044561"/>
    </isoform>
    <isoform>
        <id>P56270-3</id>
        <name>3</name>
        <name>SAF-3</name>
        <sequence type="described" ref="VSP_047560"/>
    </isoform>
    <isoform>
        <id>P56270-4</id>
        <name>4</name>
        <sequence type="described" ref="VSP_055108"/>
    </isoform>
</comment>
<comment type="tissue specificity">
    <text evidence="3">Present in kidney, liver and brain. In the brain, highest levels are found in motor cortex and midfrontal cortex (at protein level).</text>
</comment>
<comment type="tissue specificity">
    <molecule>Isoform 1</molecule>
    <text evidence="5 6">Expressed in the heart, brain, placenta, lung, liver, skeletal muscle and weakly expressed in the kidney (PubMed:1502157). Expressed in the joint synovium (PubMed:19583771).</text>
</comment>
<comment type="induction">
    <molecule>Isoform 3</molecule>
    <text evidence="6">Induced by cytokine and growth factor stimulation.</text>
</comment>
<comment type="miscellaneous">
    <molecule>Isoform 2</molecule>
    <text evidence="10">May act as a dominant negative of isoform 1. Reduced expression during inflammatory conditions.</text>
</comment>
<comment type="miscellaneous">
    <molecule>Isoform 3</molecule>
    <text evidence="6">The transactivation potential of isoform 3 is much greater than that of the predominantly expressed isoform 1.</text>
</comment>
<comment type="sequence caution" evidence="10">
    <conflict type="erroneous initiation">
        <sequence resource="EMBL-CDS" id="AAB04121"/>
    </conflict>
</comment>
<comment type="sequence caution" evidence="10">
    <conflict type="erroneous initiation">
        <sequence resource="EMBL-CDS" id="BAA12728"/>
    </conflict>
</comment>
<proteinExistence type="evidence at protein level"/>
<keyword id="KW-0025">Alternative splicing</keyword>
<keyword id="KW-0238">DNA-binding</keyword>
<keyword id="KW-0479">Metal-binding</keyword>
<keyword id="KW-0539">Nucleus</keyword>
<keyword id="KW-0597">Phosphoprotein</keyword>
<keyword id="KW-1267">Proteomics identification</keyword>
<keyword id="KW-1185">Reference proteome</keyword>
<keyword id="KW-0677">Repeat</keyword>
<keyword id="KW-0694">RNA-binding</keyword>
<keyword id="KW-0804">Transcription</keyword>
<keyword id="KW-0805">Transcription regulation</keyword>
<keyword id="KW-0862">Zinc</keyword>
<keyword id="KW-0863">Zinc-finger</keyword>
<organism>
    <name type="scientific">Homo sapiens</name>
    <name type="common">Human</name>
    <dbReference type="NCBI Taxonomy" id="9606"/>
    <lineage>
        <taxon>Eukaryota</taxon>
        <taxon>Metazoa</taxon>
        <taxon>Chordata</taxon>
        <taxon>Craniata</taxon>
        <taxon>Vertebrata</taxon>
        <taxon>Euteleostomi</taxon>
        <taxon>Mammalia</taxon>
        <taxon>Eutheria</taxon>
        <taxon>Euarchontoglires</taxon>
        <taxon>Primates</taxon>
        <taxon>Haplorrhini</taxon>
        <taxon>Catarrhini</taxon>
        <taxon>Hominidae</taxon>
        <taxon>Homo</taxon>
    </lineage>
</organism>
<dbReference type="EMBL" id="M94046">
    <property type="status" value="NOT_ANNOTATED_CDS"/>
    <property type="molecule type" value="mRNA"/>
</dbReference>
<dbReference type="EMBL" id="M93339">
    <property type="status" value="NOT_ANNOTATED_CDS"/>
    <property type="molecule type" value="mRNA"/>
</dbReference>
<dbReference type="EMBL" id="D85131">
    <property type="protein sequence ID" value="BAA12728.1"/>
    <property type="status" value="ALT_INIT"/>
    <property type="molecule type" value="mRNA"/>
</dbReference>
<dbReference type="EMBL" id="U33819">
    <property type="protein sequence ID" value="AAB04121.1"/>
    <property type="status" value="ALT_INIT"/>
    <property type="molecule type" value="mRNA"/>
</dbReference>
<dbReference type="EMBL" id="AB017335">
    <property type="protein sequence ID" value="BAA33064.1"/>
    <property type="molecule type" value="Genomic_DNA"/>
</dbReference>
<dbReference type="EMBL" id="AF489858">
    <property type="protein sequence ID" value="AAN03800.1"/>
    <property type="molecule type" value="mRNA"/>
</dbReference>
<dbReference type="EMBL" id="EF059746">
    <property type="protein sequence ID" value="ABN80996.1"/>
    <property type="molecule type" value="mRNA"/>
</dbReference>
<dbReference type="EMBL" id="FJ532357">
    <property type="protein sequence ID" value="ACS26236.1"/>
    <property type="molecule type" value="mRNA"/>
</dbReference>
<dbReference type="EMBL" id="AC009133">
    <property type="status" value="NOT_ANNOTATED_CDS"/>
    <property type="molecule type" value="Genomic_DNA"/>
</dbReference>
<dbReference type="EMBL" id="CH471238">
    <property type="protein sequence ID" value="EAW79996.1"/>
    <property type="molecule type" value="Genomic_DNA"/>
</dbReference>
<dbReference type="EMBL" id="CH471238">
    <property type="protein sequence ID" value="EAW79997.1"/>
    <property type="molecule type" value="Genomic_DNA"/>
</dbReference>
<dbReference type="CCDS" id="CCDS42143.1">
    <molecule id="P56270-1"/>
</dbReference>
<dbReference type="CCDS" id="CCDS42144.1">
    <molecule id="P56270-2"/>
</dbReference>
<dbReference type="CCDS" id="CCDS61902.1">
    <molecule id="P56270-3"/>
</dbReference>
<dbReference type="CCDS" id="CCDS61903.1">
    <molecule id="P56270-4"/>
</dbReference>
<dbReference type="PIR" id="A42170">
    <property type="entry name" value="A42170"/>
</dbReference>
<dbReference type="PIR" id="JC5076">
    <property type="entry name" value="JC5076"/>
</dbReference>
<dbReference type="RefSeq" id="NP_001036004.1">
    <molecule id="P56270-2"/>
    <property type="nucleotide sequence ID" value="NM_001042539.3"/>
</dbReference>
<dbReference type="RefSeq" id="NP_001263204.1">
    <molecule id="P56270-3"/>
    <property type="nucleotide sequence ID" value="NM_001276275.2"/>
</dbReference>
<dbReference type="RefSeq" id="NP_001263205.1">
    <molecule id="P56270-4"/>
    <property type="nucleotide sequence ID" value="NM_001276276.2"/>
</dbReference>
<dbReference type="RefSeq" id="NP_002374.2">
    <molecule id="P56270-1"/>
    <property type="nucleotide sequence ID" value="NM_002383.4"/>
</dbReference>
<dbReference type="RefSeq" id="XP_047290066.1">
    <molecule id="P56270-2"/>
    <property type="nucleotide sequence ID" value="XM_047434110.1"/>
</dbReference>
<dbReference type="RefSeq" id="XP_054236300.1">
    <molecule id="P56270-2"/>
    <property type="nucleotide sequence ID" value="XM_054380325.1"/>
</dbReference>
<dbReference type="SMR" id="P56270"/>
<dbReference type="BioGRID" id="110320">
    <property type="interactions" value="103"/>
</dbReference>
<dbReference type="CORUM" id="P56270"/>
<dbReference type="FunCoup" id="P56270">
    <property type="interactions" value="1503"/>
</dbReference>
<dbReference type="IntAct" id="P56270">
    <property type="interactions" value="37"/>
</dbReference>
<dbReference type="MINT" id="P56270"/>
<dbReference type="STRING" id="9606.ENSP00000219782"/>
<dbReference type="GlyGen" id="P56270">
    <property type="glycosylation" value="3 sites, 1 O-linked glycan (2 sites)"/>
</dbReference>
<dbReference type="iPTMnet" id="P56270"/>
<dbReference type="PhosphoSitePlus" id="P56270"/>
<dbReference type="SwissPalm" id="P56270"/>
<dbReference type="BioMuta" id="MAZ"/>
<dbReference type="DMDM" id="3024110"/>
<dbReference type="jPOST" id="P56270"/>
<dbReference type="MassIVE" id="P56270"/>
<dbReference type="PaxDb" id="9606-ENSP00000219782"/>
<dbReference type="PeptideAtlas" id="P56270"/>
<dbReference type="ProteomicsDB" id="33810"/>
<dbReference type="ProteomicsDB" id="41756"/>
<dbReference type="ProteomicsDB" id="56907">
    <molecule id="P56270-1"/>
</dbReference>
<dbReference type="ProteomicsDB" id="7603"/>
<dbReference type="Pumba" id="P56270"/>
<dbReference type="Antibodypedia" id="26824">
    <property type="antibodies" value="323 antibodies from 30 providers"/>
</dbReference>
<dbReference type="DNASU" id="4150"/>
<dbReference type="Ensembl" id="ENST00000219782.11">
    <molecule id="P56270-2"/>
    <property type="protein sequence ID" value="ENSP00000219782.6"/>
    <property type="gene ID" value="ENSG00000103495.15"/>
</dbReference>
<dbReference type="Ensembl" id="ENST00000322945.11">
    <molecule id="P56270-1"/>
    <property type="protein sequence ID" value="ENSP00000313362.6"/>
    <property type="gene ID" value="ENSG00000103495.15"/>
</dbReference>
<dbReference type="Ensembl" id="ENST00000545521.5">
    <molecule id="P56270-3"/>
    <property type="protein sequence ID" value="ENSP00000443956.1"/>
    <property type="gene ID" value="ENSG00000103495.15"/>
</dbReference>
<dbReference type="Ensembl" id="ENST00000562337.5">
    <molecule id="P56270-4"/>
    <property type="protein sequence ID" value="ENSP00000455726.1"/>
    <property type="gene ID" value="ENSG00000103495.15"/>
</dbReference>
<dbReference type="GeneID" id="4150"/>
<dbReference type="KEGG" id="hsa:4150"/>
<dbReference type="MANE-Select" id="ENST00000322945.11">
    <property type="protein sequence ID" value="ENSP00000313362.6"/>
    <property type="RefSeq nucleotide sequence ID" value="NM_002383.4"/>
    <property type="RefSeq protein sequence ID" value="NP_002374.2"/>
</dbReference>
<dbReference type="UCSC" id="uc002dtx.5">
    <molecule id="P56270-1"/>
    <property type="organism name" value="human"/>
</dbReference>
<dbReference type="AGR" id="HGNC:6914"/>
<dbReference type="CTD" id="4150"/>
<dbReference type="DisGeNET" id="4150"/>
<dbReference type="GeneCards" id="MAZ"/>
<dbReference type="HGNC" id="HGNC:6914">
    <property type="gene designation" value="MAZ"/>
</dbReference>
<dbReference type="HPA" id="ENSG00000103495">
    <property type="expression patterns" value="Low tissue specificity"/>
</dbReference>
<dbReference type="MIM" id="600999">
    <property type="type" value="gene"/>
</dbReference>
<dbReference type="neXtProt" id="NX_P56270"/>
<dbReference type="OpenTargets" id="ENSG00000103495"/>
<dbReference type="PharmGKB" id="PA30657"/>
<dbReference type="VEuPathDB" id="HostDB:ENSG00000103495"/>
<dbReference type="eggNOG" id="KOG1721">
    <property type="taxonomic scope" value="Eukaryota"/>
</dbReference>
<dbReference type="GeneTree" id="ENSGT00940000158525"/>
<dbReference type="HOGENOM" id="CLU_042232_0_0_1"/>
<dbReference type="InParanoid" id="P56270"/>
<dbReference type="OMA" id="HVNQEGQ"/>
<dbReference type="OrthoDB" id="3176202at2759"/>
<dbReference type="PAN-GO" id="P56270">
    <property type="GO annotations" value="3 GO annotations based on evolutionary models"/>
</dbReference>
<dbReference type="PhylomeDB" id="P56270"/>
<dbReference type="TreeFam" id="TF331686"/>
<dbReference type="PathwayCommons" id="P56270"/>
<dbReference type="SignaLink" id="P56270"/>
<dbReference type="SIGNOR" id="P56270"/>
<dbReference type="BioGRID-ORCS" id="4150">
    <property type="hits" value="30 hits in 1186 CRISPR screens"/>
</dbReference>
<dbReference type="ChiTaRS" id="MAZ">
    <property type="organism name" value="human"/>
</dbReference>
<dbReference type="GeneWiki" id="MAZ_(gene)"/>
<dbReference type="GenomeRNAi" id="4150"/>
<dbReference type="Pharos" id="P56270">
    <property type="development level" value="Tbio"/>
</dbReference>
<dbReference type="PRO" id="PR:P56270"/>
<dbReference type="Proteomes" id="UP000005640">
    <property type="component" value="Chromosome 16"/>
</dbReference>
<dbReference type="RNAct" id="P56270">
    <property type="molecule type" value="protein"/>
</dbReference>
<dbReference type="Bgee" id="ENSG00000103495">
    <property type="expression patterns" value="Expressed in ventricular zone and 199 other cell types or tissues"/>
</dbReference>
<dbReference type="ExpressionAtlas" id="P56270">
    <property type="expression patterns" value="baseline and differential"/>
</dbReference>
<dbReference type="GO" id="GO:0005634">
    <property type="term" value="C:nucleus"/>
    <property type="evidence" value="ECO:0000250"/>
    <property type="project" value="UniProtKB"/>
</dbReference>
<dbReference type="GO" id="GO:0000981">
    <property type="term" value="F:DNA-binding transcription factor activity, RNA polymerase II-specific"/>
    <property type="evidence" value="ECO:0000314"/>
    <property type="project" value="ARUK-UCL"/>
</dbReference>
<dbReference type="GO" id="GO:0003723">
    <property type="term" value="F:RNA binding"/>
    <property type="evidence" value="ECO:0007005"/>
    <property type="project" value="UniProtKB"/>
</dbReference>
<dbReference type="GO" id="GO:0000978">
    <property type="term" value="F:RNA polymerase II cis-regulatory region sequence-specific DNA binding"/>
    <property type="evidence" value="ECO:0000314"/>
    <property type="project" value="UniProtKB"/>
</dbReference>
<dbReference type="GO" id="GO:0008270">
    <property type="term" value="F:zinc ion binding"/>
    <property type="evidence" value="ECO:0007669"/>
    <property type="project" value="UniProtKB-KW"/>
</dbReference>
<dbReference type="GO" id="GO:2001234">
    <property type="term" value="P:negative regulation of apoptotic signaling pathway"/>
    <property type="evidence" value="ECO:0000314"/>
    <property type="project" value="ARUK-UCL"/>
</dbReference>
<dbReference type="GO" id="GO:0000122">
    <property type="term" value="P:negative regulation of transcription by RNA polymerase II"/>
    <property type="evidence" value="ECO:0000314"/>
    <property type="project" value="UniProtKB"/>
</dbReference>
<dbReference type="GO" id="GO:0030335">
    <property type="term" value="P:positive regulation of cell migration"/>
    <property type="evidence" value="ECO:0000314"/>
    <property type="project" value="ARUK-UCL"/>
</dbReference>
<dbReference type="GO" id="GO:0008284">
    <property type="term" value="P:positive regulation of cell population proliferation"/>
    <property type="evidence" value="ECO:0000314"/>
    <property type="project" value="ARUK-UCL"/>
</dbReference>
<dbReference type="GO" id="GO:0045893">
    <property type="term" value="P:positive regulation of DNA-templated transcription"/>
    <property type="evidence" value="ECO:0000314"/>
    <property type="project" value="ARUK-UCL"/>
</dbReference>
<dbReference type="GO" id="GO:0010628">
    <property type="term" value="P:positive regulation of gene expression"/>
    <property type="evidence" value="ECO:0000314"/>
    <property type="project" value="ARUK-UCL"/>
</dbReference>
<dbReference type="GO" id="GO:0051897">
    <property type="term" value="P:positive regulation of phosphatidylinositol 3-kinase/protein kinase B signal transduction"/>
    <property type="evidence" value="ECO:0000314"/>
    <property type="project" value="ARUK-UCL"/>
</dbReference>
<dbReference type="GO" id="GO:0006357">
    <property type="term" value="P:regulation of transcription by RNA polymerase II"/>
    <property type="evidence" value="ECO:0000318"/>
    <property type="project" value="GO_Central"/>
</dbReference>
<dbReference type="GO" id="GO:0006369">
    <property type="term" value="P:termination of RNA polymerase II transcription"/>
    <property type="evidence" value="ECO:0000314"/>
    <property type="project" value="UniProtKB"/>
</dbReference>
<dbReference type="GO" id="GO:0006367">
    <property type="term" value="P:transcription initiation at RNA polymerase II promoter"/>
    <property type="evidence" value="ECO:0000314"/>
    <property type="project" value="UniProtKB"/>
</dbReference>
<dbReference type="FunFam" id="3.30.160.60:FF:000780">
    <property type="entry name" value="myc-associated zinc finger protein isoform X1"/>
    <property type="match status" value="1"/>
</dbReference>
<dbReference type="FunFam" id="3.30.160.60:FF:000859">
    <property type="entry name" value="myc-associated zinc finger protein isoform X2"/>
    <property type="match status" value="1"/>
</dbReference>
<dbReference type="FunFam" id="3.30.160.60:FF:000095">
    <property type="entry name" value="Vascular endothelial zinc finger 1"/>
    <property type="match status" value="1"/>
</dbReference>
<dbReference type="FunFam" id="3.30.160.60:FF:000108">
    <property type="entry name" value="Vascular endothelial zinc finger 1"/>
    <property type="match status" value="1"/>
</dbReference>
<dbReference type="Gene3D" id="3.30.160.60">
    <property type="entry name" value="Classic Zinc Finger"/>
    <property type="match status" value="5"/>
</dbReference>
<dbReference type="InterPro" id="IPR036236">
    <property type="entry name" value="Znf_C2H2_sf"/>
</dbReference>
<dbReference type="InterPro" id="IPR013087">
    <property type="entry name" value="Znf_C2H2_type"/>
</dbReference>
<dbReference type="PANTHER" id="PTHR24394:SF29">
    <property type="entry name" value="MYONEURIN"/>
    <property type="match status" value="1"/>
</dbReference>
<dbReference type="PANTHER" id="PTHR24394">
    <property type="entry name" value="ZINC FINGER PROTEIN"/>
    <property type="match status" value="1"/>
</dbReference>
<dbReference type="Pfam" id="PF00096">
    <property type="entry name" value="zf-C2H2"/>
    <property type="match status" value="3"/>
</dbReference>
<dbReference type="Pfam" id="PF13894">
    <property type="entry name" value="zf-C2H2_4"/>
    <property type="match status" value="1"/>
</dbReference>
<dbReference type="SMART" id="SM00355">
    <property type="entry name" value="ZnF_C2H2"/>
    <property type="match status" value="6"/>
</dbReference>
<dbReference type="SUPFAM" id="SSF57667">
    <property type="entry name" value="beta-beta-alpha zinc fingers"/>
    <property type="match status" value="3"/>
</dbReference>
<dbReference type="PROSITE" id="PS00028">
    <property type="entry name" value="ZINC_FINGER_C2H2_1"/>
    <property type="match status" value="5"/>
</dbReference>
<dbReference type="PROSITE" id="PS50157">
    <property type="entry name" value="ZINC_FINGER_C2H2_2"/>
    <property type="match status" value="5"/>
</dbReference>
<accession>P56270</accession>
<accession>A8QJL9</accession>
<accession>C6G496</accession>
<accession>G5E927</accession>
<accession>H3BQD6</accession>
<accession>Q15703</accession>
<accession>Q8NFN7</accession>
<accession>Q99443</accession>
<gene>
    <name type="primary">MAZ</name>
    <name type="synonym">ZNF801</name>
</gene>
<sequence length="477" mass="48608">MFPVFPCTLLAPPFPVLGLDSRGVGGLMNSFPPPQGHAQNPLQVGAELQSRFFASQGCAQSPFQAAPAPPPTPQAPAAEPLQVDLLPVLAAAQESAAAAAAAAAAAAAVAAAPPAPAAASTVDTAALKQPPAPPPPPPPVSAPAAEAAPPASAATIAAAAATAVVAPTSTVAVAPVASALEKKTKSKGPYICALCAKEFKNGYNLRRHEAIHTGAKAGRVPSGAMKMPTMVPLSLLSVPQLSGAGGGGGEAGAGGGAAAVAAGGVVTTTASGKRIRKNHACEMCGKAFRDVYHLNRHKLSHSDEKPYQCPVCQQRFKRKDRMSYHVRSHDGAVHKPYNCSHCGKSFSRPDHLNSHVRQVHSTERPFKCEKCEAAFATKDRLRAHTVRHEEKVPCHVCGKMLSSAYISDHMKVHSQGPHHVCELCNKGTGEVCPMAAAAAAAAAAAAAAVAAPPTAVGSLSGAEGVPVSSQPLPSQPW</sequence>
<evidence type="ECO:0000255" key="1">
    <source>
        <dbReference type="PROSITE-ProRule" id="PRU00042"/>
    </source>
</evidence>
<evidence type="ECO:0000256" key="2">
    <source>
        <dbReference type="SAM" id="MobiDB-lite"/>
    </source>
</evidence>
<evidence type="ECO:0000269" key="3">
    <source>
    </source>
</evidence>
<evidence type="ECO:0000269" key="4">
    <source>
    </source>
</evidence>
<evidence type="ECO:0000269" key="5">
    <source>
    </source>
</evidence>
<evidence type="ECO:0000269" key="6">
    <source>
    </source>
</evidence>
<evidence type="ECO:0000303" key="7">
    <source>
    </source>
</evidence>
<evidence type="ECO:0000303" key="8">
    <source>
    </source>
</evidence>
<evidence type="ECO:0000303" key="9">
    <source>
    </source>
</evidence>
<evidence type="ECO:0000305" key="10"/>
<evidence type="ECO:0000305" key="11">
    <source>
    </source>
</evidence>
<evidence type="ECO:0007744" key="12">
    <source>
    </source>
</evidence>